<keyword id="KW-0238">DNA-binding</keyword>
<keyword id="KW-0408">Iron</keyword>
<keyword id="KW-0479">Metal-binding</keyword>
<keyword id="KW-0539">Nucleus</keyword>
<keyword id="KW-0560">Oxidoreductase</keyword>
<keyword id="KW-1185">Reference proteome</keyword>
<keyword id="KW-0804">Transcription</keyword>
<keyword id="KW-0805">Transcription regulation</keyword>
<keyword id="KW-0862">Zinc</keyword>
<keyword id="KW-0863">Zinc-finger</keyword>
<evidence type="ECO:0000250" key="1"/>
<evidence type="ECO:0000250" key="2">
    <source>
        <dbReference type="UniProtKB" id="O43593"/>
    </source>
</evidence>
<evidence type="ECO:0000255" key="3">
    <source>
        <dbReference type="PROSITE-ProRule" id="PRU00538"/>
    </source>
</evidence>
<evidence type="ECO:0000256" key="4">
    <source>
        <dbReference type="SAM" id="MobiDB-lite"/>
    </source>
</evidence>
<evidence type="ECO:0000269" key="5">
    <source>
    </source>
</evidence>
<evidence type="ECO:0000305" key="6"/>
<accession>P97609</accession>
<proteinExistence type="evidence at protein level"/>
<comment type="function">
    <text evidence="2">Histone demethylase that specifically demethylates both mono- and dimethylated 'Lys-9' of histone H3. May act as a transcription regulator controlling hair biology (via targeting of collagens), neural activity, and cell cycle.</text>
</comment>
<comment type="catalytic activity">
    <reaction evidence="2">
        <text>N(6),N(6)-dimethyl-L-lysyl(9)-[histone H3] + 2 2-oxoglutarate + 2 O2 = L-lysyl(9)-[histone H3] + 2 formaldehyde + 2 succinate + 2 CO2</text>
        <dbReference type="Rhea" id="RHEA:60188"/>
        <dbReference type="Rhea" id="RHEA-COMP:15541"/>
        <dbReference type="Rhea" id="RHEA-COMP:15546"/>
        <dbReference type="ChEBI" id="CHEBI:15379"/>
        <dbReference type="ChEBI" id="CHEBI:16526"/>
        <dbReference type="ChEBI" id="CHEBI:16810"/>
        <dbReference type="ChEBI" id="CHEBI:16842"/>
        <dbReference type="ChEBI" id="CHEBI:29969"/>
        <dbReference type="ChEBI" id="CHEBI:30031"/>
        <dbReference type="ChEBI" id="CHEBI:61976"/>
        <dbReference type="EC" id="1.14.11.65"/>
    </reaction>
</comment>
<comment type="cofactor">
    <cofactor evidence="1">
        <name>Fe(2+)</name>
        <dbReference type="ChEBI" id="CHEBI:29033"/>
    </cofactor>
    <text evidence="1">Binds 1 Fe(2+) ion per subunit.</text>
</comment>
<comment type="subcellular location">
    <subcellularLocation>
        <location>Nucleus</location>
    </subcellularLocation>
</comment>
<comment type="domain">
    <text evidence="5">Contains two Leu-Xaa-Xaa-Leu-Leu (LXXLL) motifs. The LXXLL motifs are essential for the association with nuclear receptors (PubMed:14570920).</text>
</comment>
<comment type="domain">
    <text evidence="1">The JmjC domain and the C6-type zinc-finger are required for the demethylation activity.</text>
</comment>
<comment type="sequence caution" evidence="6">
    <conflict type="erroneous initiation">
        <sequence resource="EMBL-CDS" id="AAC53018"/>
    </conflict>
</comment>
<feature type="chain" id="PRO_0000083892" description="Lysine-specific demethylase hairless">
    <location>
        <begin position="1"/>
        <end position="1181"/>
    </location>
</feature>
<feature type="domain" description="JmjC" evidence="3">
    <location>
        <begin position="938"/>
        <end position="1149"/>
    </location>
</feature>
<feature type="zinc finger region" description="C6-type">
    <location>
        <begin position="594"/>
        <end position="619"/>
    </location>
</feature>
<feature type="region of interest" description="Disordered" evidence="4">
    <location>
        <begin position="311"/>
        <end position="378"/>
    </location>
</feature>
<feature type="region of interest" description="Disordered" evidence="4">
    <location>
        <begin position="413"/>
        <end position="472"/>
    </location>
</feature>
<feature type="region of interest" description="Disordered" evidence="4">
    <location>
        <begin position="509"/>
        <end position="543"/>
    </location>
</feature>
<feature type="region of interest" description="Disordered" evidence="4">
    <location>
        <begin position="696"/>
        <end position="745"/>
    </location>
</feature>
<feature type="short sequence motif" description="LXXLL motif 1">
    <location>
        <begin position="560"/>
        <end position="564"/>
    </location>
</feature>
<feature type="short sequence motif" description="LXXLL motif 2">
    <location>
        <begin position="752"/>
        <end position="756"/>
    </location>
</feature>
<feature type="compositionally biased region" description="Pro residues" evidence="4">
    <location>
        <begin position="311"/>
        <end position="323"/>
    </location>
</feature>
<feature type="compositionally biased region" description="Low complexity" evidence="4">
    <location>
        <begin position="347"/>
        <end position="357"/>
    </location>
</feature>
<feature type="compositionally biased region" description="Polar residues" evidence="4">
    <location>
        <begin position="447"/>
        <end position="461"/>
    </location>
</feature>
<feature type="compositionally biased region" description="Basic and acidic residues" evidence="4">
    <location>
        <begin position="462"/>
        <end position="472"/>
    </location>
</feature>
<feature type="compositionally biased region" description="Basic and acidic residues" evidence="4">
    <location>
        <begin position="721"/>
        <end position="730"/>
    </location>
</feature>
<feature type="binding site" evidence="3">
    <location>
        <position position="999"/>
    </location>
    <ligand>
        <name>Fe cation</name>
        <dbReference type="ChEBI" id="CHEBI:24875"/>
        <note>catalytic</note>
    </ligand>
</feature>
<feature type="binding site" evidence="3">
    <location>
        <position position="1001"/>
    </location>
    <ligand>
        <name>Fe cation</name>
        <dbReference type="ChEBI" id="CHEBI:24875"/>
        <note>catalytic</note>
    </ligand>
</feature>
<feature type="binding site" evidence="3">
    <location>
        <position position="1117"/>
    </location>
    <ligand>
        <name>Fe cation</name>
        <dbReference type="ChEBI" id="CHEBI:24875"/>
        <note>catalytic</note>
    </ligand>
</feature>
<feature type="mutagenesis site" description="Decreases RORA protein stability. Strongly decreases RORA protein stability; when associated with 752-L--A-756." evidence="5">
    <original>LL</original>
    <variation>AA</variation>
    <location>
        <begin position="563"/>
        <end position="564"/>
    </location>
</feature>
<feature type="mutagenesis site" description="Decreases RORA protein stability. Strongly decreases RORA protein stability; when associated with 560-L--A-564.">
    <original>LL</original>
    <variation>AA</variation>
    <location>
        <begin position="755"/>
        <end position="756"/>
    </location>
</feature>
<protein>
    <recommendedName>
        <fullName>Lysine-specific demethylase hairless</fullName>
        <ecNumber evidence="2">1.14.11.65</ecNumber>
    </recommendedName>
    <alternativeName>
        <fullName evidence="6">[histone H3]-dimethyl-L-lysine(9) demethylase hairless</fullName>
    </alternativeName>
</protein>
<gene>
    <name type="primary">Hr</name>
</gene>
<reference key="1">
    <citation type="journal article" date="1996" name="J. Neurosci.">
        <title>Thyroid hormone-responsive genes in developing cerebellum include a novel synaptotagmin and a hairless homolog.</title>
        <authorList>
            <person name="Thompson C.C."/>
        </authorList>
    </citation>
    <scope>NUCLEOTIDE SEQUENCE [MRNA]</scope>
    <source>
        <strain>Sprague-Dawley</strain>
    </source>
</reference>
<reference key="2">
    <citation type="journal article" date="2003" name="J. Biol. Chem.">
        <title>The co-repressor hairless protects RORalpha orphan nuclear receptor from proteasome-mediated degradation.</title>
        <authorList>
            <person name="Moraitis A.N."/>
            <person name="Giguere V."/>
        </authorList>
    </citation>
    <scope>DOMAIN</scope>
    <scope>MUTAGENESIS OF 563-LEU-LEU-564 AND 756-LEU-LEU-756</scope>
</reference>
<sequence length="1181" mass="127307">MESMPSFLKDTPAWEKTAPVNGIVGQEPGTSPQDGLHHGALCLGEPVPFWRGVLSAPDSWLPPGFLQGPKDTLSVVEGEGSRNGERKANWLGSKEGLRWKEAMLAHPLAFCGPACPPRYGPLIPEHSSGHPKSDPVAFRPLHCPFLLETKILERAPFWVPTCLPPYLMSSLPPERSYDWPLAPSPWVYSGSQPKVPSAFSLGSKGFYHKDPNILRPAKEPLAASESGMLGLAPGGHLQQACDAEGPSLHQRDGETGAGRQQNLCPVFLGYPDTVPRTPWPSCPPGLVHTLGNVWAGPGSNSFGYQLGPPVTPRCPSPGPPTPPGGCCSSHLPAREGDPGPCRKCQDSPEGSSSGPGESSEERNKAGSRASPPSHHTKLKKTWLTRHSEQFECPGGCPGKGESPATGLRALKRAGSPEVQGARGPAPKRPSHTFPGTGRQGARAWQETPETSTGSKAEAQQQEEQRGPRDGRIRLRESRLEDTSCQHHLAGVTQCPSCVQAAGEVEILTSHSQKSHKLPLEEKPLEEDSCATSEEGGGSSPEASINKGLAKHLLSGLGDRLCRLLRKEREALAWAQREGQGPAMTEDSPGIPHCCSRCHHGLFNTHWRCSHCSHRLCVACGRIAGAGKNREKTGSREQRTDDCAQEAGHAACSLILTQFVSSQALAELSTVMHQVWAKFDIRGHCFCQVDARVWAPGDGGQQKEPTEKTPPAPQLSCNGDSNRTKDIKEETPDSTESPAEDRAGRSPLPCPSLCELLASTAVKLCLGHERIHMAFAPVTPALPSDDRITNILDSIIAQVVERKIQEKALGPGLRAGSGLRKGLSLPLSPVRTQLSPPGALLWLQEPRPKHGFRLFQEHWRQGQPVLVSGIQKTLRLSLWGMEALGTLGGQVQTLTALGPPQPTSLDSTAFWKGFSHPEARPKLDEGSVLLLHRPLGDKDESRVENLASSLPLPEYCAHQGKLNLASYLPLGLTLHPLEPQLWAAYGVNSHRGHLGTKNLCVEVSDLISILVHAEAQLPPWYRAQKDFLSGLDGEGLWSPGSQTSTVWHVFRAQDAQRIRRFLQMVCPAGAGTLEPGAPGSCYLDSGLRRRLREEWGVSCWTLLQAPGEAVLVPAGAPHQVQGLVSTISVTQHFLSPETSALSAQLCHQGASLPPDHRMLYAQMDRAVFQAVKVAVGTLQEAK</sequence>
<organism>
    <name type="scientific">Rattus norvegicus</name>
    <name type="common">Rat</name>
    <dbReference type="NCBI Taxonomy" id="10116"/>
    <lineage>
        <taxon>Eukaryota</taxon>
        <taxon>Metazoa</taxon>
        <taxon>Chordata</taxon>
        <taxon>Craniata</taxon>
        <taxon>Vertebrata</taxon>
        <taxon>Euteleostomi</taxon>
        <taxon>Mammalia</taxon>
        <taxon>Eutheria</taxon>
        <taxon>Euarchontoglires</taxon>
        <taxon>Glires</taxon>
        <taxon>Rodentia</taxon>
        <taxon>Myomorpha</taxon>
        <taxon>Muroidea</taxon>
        <taxon>Muridae</taxon>
        <taxon>Murinae</taxon>
        <taxon>Rattus</taxon>
    </lineage>
</organism>
<name>HAIR_RAT</name>
<dbReference type="EC" id="1.14.11.65" evidence="2"/>
<dbReference type="EMBL" id="U71293">
    <property type="protein sequence ID" value="AAC53018.1"/>
    <property type="status" value="ALT_INIT"/>
    <property type="molecule type" value="mRNA"/>
</dbReference>
<dbReference type="SMR" id="P97609"/>
<dbReference type="FunCoup" id="P97609">
    <property type="interactions" value="72"/>
</dbReference>
<dbReference type="STRING" id="10116.ENSRNOP00000015716"/>
<dbReference type="CarbonylDB" id="P97609"/>
<dbReference type="GlyGen" id="P97609">
    <property type="glycosylation" value="3 sites"/>
</dbReference>
<dbReference type="iPTMnet" id="P97609"/>
<dbReference type="PhosphoSitePlus" id="P97609"/>
<dbReference type="PaxDb" id="10116-ENSRNOP00000015716"/>
<dbReference type="UCSC" id="RGD:620634">
    <property type="organism name" value="rat"/>
</dbReference>
<dbReference type="AGR" id="RGD:620634"/>
<dbReference type="RGD" id="620634">
    <property type="gene designation" value="Hr"/>
</dbReference>
<dbReference type="eggNOG" id="KOG1356">
    <property type="taxonomic scope" value="Eukaryota"/>
</dbReference>
<dbReference type="InParanoid" id="P97609"/>
<dbReference type="PhylomeDB" id="P97609"/>
<dbReference type="PRO" id="PR:P97609"/>
<dbReference type="Proteomes" id="UP000002494">
    <property type="component" value="Unplaced"/>
</dbReference>
<dbReference type="GO" id="GO:0000785">
    <property type="term" value="C:chromatin"/>
    <property type="evidence" value="ECO:0000318"/>
    <property type="project" value="GO_Central"/>
</dbReference>
<dbReference type="GO" id="GO:0000118">
    <property type="term" value="C:histone deacetylase complex"/>
    <property type="evidence" value="ECO:0000314"/>
    <property type="project" value="RGD"/>
</dbReference>
<dbReference type="GO" id="GO:0016604">
    <property type="term" value="C:nuclear body"/>
    <property type="evidence" value="ECO:0000266"/>
    <property type="project" value="RGD"/>
</dbReference>
<dbReference type="GO" id="GO:0031490">
    <property type="term" value="F:chromatin DNA binding"/>
    <property type="evidence" value="ECO:0000318"/>
    <property type="project" value="GO_Central"/>
</dbReference>
<dbReference type="GO" id="GO:0042826">
    <property type="term" value="F:histone deacetylase binding"/>
    <property type="evidence" value="ECO:0000314"/>
    <property type="project" value="RGD"/>
</dbReference>
<dbReference type="GO" id="GO:0032454">
    <property type="term" value="F:histone H3K9 demethylase activity"/>
    <property type="evidence" value="ECO:0000318"/>
    <property type="project" value="GO_Central"/>
</dbReference>
<dbReference type="GO" id="GO:0140683">
    <property type="term" value="F:histone H3K9me/H3K9me2 demethylase activity"/>
    <property type="evidence" value="ECO:0007669"/>
    <property type="project" value="UniProtKB-EC"/>
</dbReference>
<dbReference type="GO" id="GO:0046966">
    <property type="term" value="F:nuclear thyroid hormone receptor binding"/>
    <property type="evidence" value="ECO:0000353"/>
    <property type="project" value="RGD"/>
</dbReference>
<dbReference type="GO" id="GO:0042809">
    <property type="term" value="F:nuclear vitamin D receptor binding"/>
    <property type="evidence" value="ECO:0000353"/>
    <property type="project" value="RGD"/>
</dbReference>
<dbReference type="GO" id="GO:0044877">
    <property type="term" value="F:protein-containing complex binding"/>
    <property type="evidence" value="ECO:0000314"/>
    <property type="project" value="RGD"/>
</dbReference>
<dbReference type="GO" id="GO:0003712">
    <property type="term" value="F:transcription coregulator activity"/>
    <property type="evidence" value="ECO:0000318"/>
    <property type="project" value="GO_Central"/>
</dbReference>
<dbReference type="GO" id="GO:0003714">
    <property type="term" value="F:transcription corepressor activity"/>
    <property type="evidence" value="ECO:0000314"/>
    <property type="project" value="RGD"/>
</dbReference>
<dbReference type="GO" id="GO:0008270">
    <property type="term" value="F:zinc ion binding"/>
    <property type="evidence" value="ECO:0007669"/>
    <property type="project" value="UniProtKB-KW"/>
</dbReference>
<dbReference type="GO" id="GO:0045892">
    <property type="term" value="P:negative regulation of DNA-templated transcription"/>
    <property type="evidence" value="ECO:0000266"/>
    <property type="project" value="RGD"/>
</dbReference>
<dbReference type="GO" id="GO:0006357">
    <property type="term" value="P:regulation of transcription by RNA polymerase II"/>
    <property type="evidence" value="ECO:0000318"/>
    <property type="project" value="GO_Central"/>
</dbReference>
<dbReference type="FunFam" id="2.60.120.650:FF:000017">
    <property type="entry name" value="lysine-specific demethylase hairless isoform X1"/>
    <property type="match status" value="1"/>
</dbReference>
<dbReference type="Gene3D" id="2.60.120.650">
    <property type="entry name" value="Cupin"/>
    <property type="match status" value="1"/>
</dbReference>
<dbReference type="InterPro" id="IPR045109">
    <property type="entry name" value="JHDM2-like"/>
</dbReference>
<dbReference type="InterPro" id="IPR003347">
    <property type="entry name" value="JmjC_dom"/>
</dbReference>
<dbReference type="PANTHER" id="PTHR12549">
    <property type="entry name" value="JMJC DOMAIN-CONTAINING HISTONE DEMETHYLATION PROTEIN"/>
    <property type="match status" value="1"/>
</dbReference>
<dbReference type="PANTHER" id="PTHR12549:SF4">
    <property type="entry name" value="LYSINE-SPECIFIC DEMETHYLASE HAIRLESS"/>
    <property type="match status" value="1"/>
</dbReference>
<dbReference type="Pfam" id="PF02373">
    <property type="entry name" value="JmjC"/>
    <property type="match status" value="1"/>
</dbReference>
<dbReference type="SMART" id="SM00558">
    <property type="entry name" value="JmjC"/>
    <property type="match status" value="1"/>
</dbReference>
<dbReference type="SUPFAM" id="SSF51197">
    <property type="entry name" value="Clavaminate synthase-like"/>
    <property type="match status" value="1"/>
</dbReference>
<dbReference type="PROSITE" id="PS51184">
    <property type="entry name" value="JMJC"/>
    <property type="match status" value="1"/>
</dbReference>